<reference key="1">
    <citation type="journal article" date="1995" name="J. Bacteriol.">
        <title>The cobalamin (coenzyme B12) biosynthetic genes of Escherichia coli.</title>
        <authorList>
            <person name="Lawrence J.G."/>
            <person name="Roth J.R."/>
        </authorList>
    </citation>
    <scope>NUCLEOTIDE SEQUENCE [GENOMIC DNA]</scope>
    <source>
        <strain>K12 / W3110 / ATCC 27325 / DSM 5911</strain>
    </source>
</reference>
<reference key="2">
    <citation type="journal article" date="1996" name="DNA Res.">
        <title>A 460-kb DNA sequence of the Escherichia coli K-12 genome corresponding to the 40.1-50.0 min region on the linkage map.</title>
        <authorList>
            <person name="Itoh T."/>
            <person name="Aiba H."/>
            <person name="Baba T."/>
            <person name="Fujita K."/>
            <person name="Hayashi K."/>
            <person name="Inada T."/>
            <person name="Isono K."/>
            <person name="Kasai H."/>
            <person name="Kimura S."/>
            <person name="Kitakawa M."/>
            <person name="Kitagawa M."/>
            <person name="Makino K."/>
            <person name="Miki T."/>
            <person name="Mizobuchi K."/>
            <person name="Mori H."/>
            <person name="Mori T."/>
            <person name="Motomura K."/>
            <person name="Nakade S."/>
            <person name="Nakamura Y."/>
            <person name="Nashimoto H."/>
            <person name="Nishio Y."/>
            <person name="Oshima T."/>
            <person name="Saito N."/>
            <person name="Sampei G."/>
            <person name="Seki Y."/>
            <person name="Sivasundaram S."/>
            <person name="Tagami H."/>
            <person name="Takeda J."/>
            <person name="Takemoto K."/>
            <person name="Wada C."/>
            <person name="Yamamoto Y."/>
            <person name="Horiuchi T."/>
        </authorList>
    </citation>
    <scope>NUCLEOTIDE SEQUENCE [LARGE SCALE GENOMIC DNA]</scope>
    <source>
        <strain>K12 / W3110 / ATCC 27325 / DSM 5911</strain>
    </source>
</reference>
<reference key="3">
    <citation type="journal article" date="1997" name="Science">
        <title>The complete genome sequence of Escherichia coli K-12.</title>
        <authorList>
            <person name="Blattner F.R."/>
            <person name="Plunkett G. III"/>
            <person name="Bloch C.A."/>
            <person name="Perna N.T."/>
            <person name="Burland V."/>
            <person name="Riley M."/>
            <person name="Collado-Vides J."/>
            <person name="Glasner J.D."/>
            <person name="Rode C.K."/>
            <person name="Mayhew G.F."/>
            <person name="Gregor J."/>
            <person name="Davis N.W."/>
            <person name="Kirkpatrick H.A."/>
            <person name="Goeden M.A."/>
            <person name="Rose D.J."/>
            <person name="Mau B."/>
            <person name="Shao Y."/>
        </authorList>
    </citation>
    <scope>NUCLEOTIDE SEQUENCE [LARGE SCALE GENOMIC DNA]</scope>
    <source>
        <strain>K12 / MG1655 / ATCC 47076</strain>
    </source>
</reference>
<reference key="4">
    <citation type="journal article" date="2006" name="Mol. Syst. Biol.">
        <title>Highly accurate genome sequences of Escherichia coli K-12 strains MG1655 and W3110.</title>
        <authorList>
            <person name="Hayashi K."/>
            <person name="Morooka N."/>
            <person name="Yamamoto Y."/>
            <person name="Fujita K."/>
            <person name="Isono K."/>
            <person name="Choi S."/>
            <person name="Ohtsubo E."/>
            <person name="Baba T."/>
            <person name="Wanner B.L."/>
            <person name="Mori H."/>
            <person name="Horiuchi T."/>
        </authorList>
    </citation>
    <scope>NUCLEOTIDE SEQUENCE [LARGE SCALE GENOMIC DNA]</scope>
    <source>
        <strain>K12 / W3110 / ATCC 27325 / DSM 5911</strain>
    </source>
</reference>
<reference key="5">
    <citation type="journal article" date="1997" name="Electrophoresis">
        <title>Comparing the predicted and observed properties of proteins encoded in the genome of Escherichia coli K-12.</title>
        <authorList>
            <person name="Link A.J."/>
            <person name="Robison K."/>
            <person name="Church G.M."/>
        </authorList>
    </citation>
    <scope>PROTEIN SEQUENCE OF 22-33</scope>
    <source>
        <strain>K12 / EMG2</strain>
    </source>
</reference>
<reference key="6">
    <citation type="journal article" date="2008" name="J. Bacteriol.">
        <title>Identification of the L,D-transpeptidases for peptidoglycan cross-linking in Escherichia coli.</title>
        <authorList>
            <person name="Magnet S."/>
            <person name="Dubost L."/>
            <person name="Marie A."/>
            <person name="Arthur M."/>
            <person name="Gutmann L."/>
        </authorList>
    </citation>
    <scope>FUNCTION</scope>
    <scope>DISRUPTION PHENOTYPE</scope>
    <source>
        <strain>K12 / BW25113</strain>
    </source>
</reference>
<reference key="7">
    <citation type="journal article" date="2009" name="Science">
        <title>A periplasmic reducing system protects single cysteine residues from oxidation.</title>
        <authorList>
            <person name="Depuydt M."/>
            <person name="Leonard S.E."/>
            <person name="Vertommen D."/>
            <person name="Denoncin K."/>
            <person name="Morsomme P."/>
            <person name="Wahni K."/>
            <person name="Messens J."/>
            <person name="Carroll K.S."/>
            <person name="Collet J.F."/>
        </authorList>
    </citation>
    <scope>IDENTIFICATION BY MASS SPECTROMETRY</scope>
    <scope>INTERACTION WITH DSBG</scope>
    <source>
        <strain>K12 / MC1000 / ATCC 39531</strain>
    </source>
</reference>
<comment type="function">
    <text evidence="2">Responsible, at least in part, for anchoring of the major outer membrane lipoprotein (Lpp, also known as the Braun lipoprotein) to the peptidoglycan via a meso-diaminopimelyl-L-Lys- bond on the terminal residue of Lpp.</text>
</comment>
<comment type="pathway">
    <text>Cell wall biogenesis; peptidoglycan biosynthesis.</text>
</comment>
<comment type="subunit">
    <text evidence="3">Interacts with DsbG.</text>
</comment>
<comment type="interaction">
    <interactant intactId="EBI-555707">
        <id>P39176</id>
    </interactant>
    <interactant intactId="EBI-555676">
        <id>P08312</id>
        <label>pheS</label>
    </interactant>
    <organismsDiffer>false</organismsDiffer>
    <experiments>4</experiments>
</comment>
<comment type="subcellular location">
    <subcellularLocation>
        <location evidence="5">Periplasm</location>
    </subcellularLocation>
</comment>
<comment type="disruption phenotype">
    <text evidence="2">Simultaneous disruption of erfK, ybiS, ycfS and ynhG leads to loss of covalent anchoring of the major outer membrane lipoprotein (Lpp, also known as the Braun lipoprotein) to the peptidoglycan. Complementation with erfK restores some of this anchoring.</text>
</comment>
<comment type="similarity">
    <text evidence="5">Belongs to the YkuD family.</text>
</comment>
<accession>P39176</accession>
<dbReference type="EC" id="2.-.-.-"/>
<dbReference type="EMBL" id="U33333">
    <property type="protein sequence ID" value="AAA78909.1"/>
    <property type="molecule type" value="Genomic_DNA"/>
</dbReference>
<dbReference type="EMBL" id="U00096">
    <property type="protein sequence ID" value="AAC75051.1"/>
    <property type="molecule type" value="Genomic_DNA"/>
</dbReference>
<dbReference type="EMBL" id="AP009048">
    <property type="protein sequence ID" value="BAA15807.1"/>
    <property type="molecule type" value="Genomic_DNA"/>
</dbReference>
<dbReference type="PIR" id="E64963">
    <property type="entry name" value="E64963"/>
</dbReference>
<dbReference type="RefSeq" id="NP_416494.1">
    <property type="nucleotide sequence ID" value="NC_000913.3"/>
</dbReference>
<dbReference type="SMR" id="P39176"/>
<dbReference type="BioGRID" id="4259382">
    <property type="interactions" value="20"/>
</dbReference>
<dbReference type="BioGRID" id="849652">
    <property type="interactions" value="1"/>
</dbReference>
<dbReference type="DIP" id="DIP-9522N"/>
<dbReference type="FunCoup" id="P39176">
    <property type="interactions" value="41"/>
</dbReference>
<dbReference type="IntAct" id="P39176">
    <property type="interactions" value="3"/>
</dbReference>
<dbReference type="STRING" id="511145.b1990"/>
<dbReference type="MEROPS" id="C82.A02"/>
<dbReference type="jPOST" id="P39176"/>
<dbReference type="PaxDb" id="511145-b1990"/>
<dbReference type="EnsemblBacteria" id="AAC75051">
    <property type="protein sequence ID" value="AAC75051"/>
    <property type="gene ID" value="b1990"/>
</dbReference>
<dbReference type="GeneID" id="945273"/>
<dbReference type="KEGG" id="ecj:JW1968"/>
<dbReference type="KEGG" id="eco:b1990"/>
<dbReference type="KEGG" id="ecoc:C3026_11230"/>
<dbReference type="PATRIC" id="fig|511145.12.peg.2065"/>
<dbReference type="EchoBASE" id="EB2546"/>
<dbReference type="eggNOG" id="COG1376">
    <property type="taxonomic scope" value="Bacteria"/>
</dbReference>
<dbReference type="HOGENOM" id="CLU_046834_0_1_6"/>
<dbReference type="InParanoid" id="P39176"/>
<dbReference type="OMA" id="QEGPTWV"/>
<dbReference type="PhylomeDB" id="P39176"/>
<dbReference type="BioCyc" id="EcoCyc:G7073-MONOMER"/>
<dbReference type="BioCyc" id="MetaCyc:G7073-MONOMER"/>
<dbReference type="UniPathway" id="UPA00219"/>
<dbReference type="PRO" id="PR:P39176"/>
<dbReference type="Proteomes" id="UP000000625">
    <property type="component" value="Chromosome"/>
</dbReference>
<dbReference type="GO" id="GO:0042597">
    <property type="term" value="C:periplasmic space"/>
    <property type="evidence" value="ECO:0007669"/>
    <property type="project" value="UniProtKB-SubCell"/>
</dbReference>
<dbReference type="GO" id="GO:0016757">
    <property type="term" value="F:glycosyltransferase activity"/>
    <property type="evidence" value="ECO:0007669"/>
    <property type="project" value="UniProtKB-KW"/>
</dbReference>
<dbReference type="GO" id="GO:0071972">
    <property type="term" value="F:peptidoglycan L,D-transpeptidase activity"/>
    <property type="evidence" value="ECO:0000314"/>
    <property type="project" value="EcoCyc"/>
</dbReference>
<dbReference type="GO" id="GO:0071555">
    <property type="term" value="P:cell wall organization"/>
    <property type="evidence" value="ECO:0007669"/>
    <property type="project" value="UniProtKB-KW"/>
</dbReference>
<dbReference type="GO" id="GO:0018104">
    <property type="term" value="P:peptidoglycan-protein cross-linking"/>
    <property type="evidence" value="ECO:0000314"/>
    <property type="project" value="EcoCyc"/>
</dbReference>
<dbReference type="GO" id="GO:0008360">
    <property type="term" value="P:regulation of cell shape"/>
    <property type="evidence" value="ECO:0007669"/>
    <property type="project" value="UniProtKB-KW"/>
</dbReference>
<dbReference type="CDD" id="cd16913">
    <property type="entry name" value="YkuD_like"/>
    <property type="match status" value="1"/>
</dbReference>
<dbReference type="FunFam" id="2.40.440.10:FF:000001">
    <property type="entry name" value="L,D-transpeptidase YbiS"/>
    <property type="match status" value="1"/>
</dbReference>
<dbReference type="Gene3D" id="2.40.440.10">
    <property type="entry name" value="L,D-transpeptidase catalytic domain-like"/>
    <property type="match status" value="1"/>
</dbReference>
<dbReference type="InterPro" id="IPR050979">
    <property type="entry name" value="LD-transpeptidase"/>
</dbReference>
<dbReference type="InterPro" id="IPR005490">
    <property type="entry name" value="LD_TPept_cat_dom"/>
</dbReference>
<dbReference type="InterPro" id="IPR041597">
    <property type="entry name" value="Ldt_C"/>
</dbReference>
<dbReference type="InterPro" id="IPR038063">
    <property type="entry name" value="Transpep_catalytic_dom"/>
</dbReference>
<dbReference type="NCBIfam" id="NF007563">
    <property type="entry name" value="PRK10190.1"/>
    <property type="match status" value="1"/>
</dbReference>
<dbReference type="PANTHER" id="PTHR30582">
    <property type="entry name" value="L,D-TRANSPEPTIDASE"/>
    <property type="match status" value="1"/>
</dbReference>
<dbReference type="PANTHER" id="PTHR30582:SF24">
    <property type="entry name" value="L,D-TRANSPEPTIDASE ERFK_SRFK-RELATED"/>
    <property type="match status" value="1"/>
</dbReference>
<dbReference type="Pfam" id="PF17969">
    <property type="entry name" value="Ldt_C"/>
    <property type="match status" value="1"/>
</dbReference>
<dbReference type="Pfam" id="PF03734">
    <property type="entry name" value="YkuD"/>
    <property type="match status" value="1"/>
</dbReference>
<dbReference type="SUPFAM" id="SSF141523">
    <property type="entry name" value="L,D-transpeptidase catalytic domain-like"/>
    <property type="match status" value="1"/>
</dbReference>
<dbReference type="PROSITE" id="PS52029">
    <property type="entry name" value="LD_TPASE"/>
    <property type="match status" value="1"/>
</dbReference>
<proteinExistence type="evidence at protein level"/>
<sequence length="310" mass="34411">MRRVNILCSFALLFASHTSLAVTYPLPPEGSRLVGQSFTVTVPDHNTQPLETFAAQYGQGLSNMLEANPGADVFLPKSGSQLTIPQQLILPDTVRKGIVVNVAEMRLYYYPPDSNTVEVFPIGIGQAGRETPRNWVTTVERKQEAPTWTPTPNTRREYAKRGESLPAFVPAGPDNPMGLYAIYIGRLYAIHGTNANFGIGLRVSQGCIRLRNDDIKYLFDNVPVGTRVQIIDQPVKYTTEPDGSNWLEVHEPLSRNRAEYESDRKVPLPVTPSLRAFINGQEVDVNRANAALQRRSGMPVQISSGSRQMF</sequence>
<feature type="signal peptide" evidence="4">
    <location>
        <begin position="1"/>
        <end position="21"/>
    </location>
</feature>
<feature type="chain" id="PRO_0000021194" description="Probable L,D-transpeptidase ErfK/SrfK">
    <location>
        <begin position="22"/>
        <end position="310"/>
    </location>
</feature>
<feature type="domain" description="L,D-TPase catalytic" evidence="1">
    <location>
        <begin position="96"/>
        <end position="231"/>
    </location>
</feature>
<feature type="active site" description="Proton donor/acceptor" evidence="1">
    <location>
        <position position="191"/>
    </location>
</feature>
<feature type="active site" description="Nucleophile" evidence="1">
    <location>
        <position position="207"/>
    </location>
</feature>
<feature type="sequence conflict" description="In Ref. 5; AA sequence." evidence="5" ref="5">
    <original>PE</original>
    <variation>TD</variation>
    <location>
        <begin position="28"/>
        <end position="29"/>
    </location>
</feature>
<organism>
    <name type="scientific">Escherichia coli (strain K12)</name>
    <dbReference type="NCBI Taxonomy" id="83333"/>
    <lineage>
        <taxon>Bacteria</taxon>
        <taxon>Pseudomonadati</taxon>
        <taxon>Pseudomonadota</taxon>
        <taxon>Gammaproteobacteria</taxon>
        <taxon>Enterobacterales</taxon>
        <taxon>Enterobacteriaceae</taxon>
        <taxon>Escherichia</taxon>
    </lineage>
</organism>
<name>ERFK_ECOLI</name>
<protein>
    <recommendedName>
        <fullName>Probable L,D-transpeptidase ErfK/SrfK</fullName>
        <ecNumber>2.-.-.-</ecNumber>
    </recommendedName>
</protein>
<keyword id="KW-0133">Cell shape</keyword>
<keyword id="KW-0961">Cell wall biogenesis/degradation</keyword>
<keyword id="KW-0903">Direct protein sequencing</keyword>
<keyword id="KW-0328">Glycosyltransferase</keyword>
<keyword id="KW-0378">Hydrolase</keyword>
<keyword id="KW-0573">Peptidoglycan synthesis</keyword>
<keyword id="KW-0574">Periplasm</keyword>
<keyword id="KW-1185">Reference proteome</keyword>
<keyword id="KW-0732">Signal</keyword>
<keyword id="KW-0808">Transferase</keyword>
<gene>
    <name type="primary">erfK</name>
    <name type="synonym">yeeG</name>
    <name type="synonym">yzzT</name>
    <name type="ordered locus">b1990</name>
    <name type="ordered locus">JW1968</name>
</gene>
<evidence type="ECO:0000255" key="1">
    <source>
        <dbReference type="PROSITE-ProRule" id="PRU01373"/>
    </source>
</evidence>
<evidence type="ECO:0000269" key="2">
    <source>
    </source>
</evidence>
<evidence type="ECO:0000269" key="3">
    <source>
    </source>
</evidence>
<evidence type="ECO:0000269" key="4">
    <source>
    </source>
</evidence>
<evidence type="ECO:0000305" key="5"/>